<name>RS2_BACAA</name>
<accession>C3P5M9</accession>
<sequence length="233" mass="26517">MSVISMKQLLEAGVHFGHQTRRWNPKMKRYIFTERNGIYIIDLQKTVKKVEEAFKVMRDIAAEGGDILFVGTKKQAQEAIKEEATRAGMYFVNQRWLGGTLTNFQTIQKRIKRLKDIERMQEDGTFEVLPKKEVVQLKKELERLEKFLGGIKDMKGLPSALFVVDPRKERIAVAEARKLHIPIIGIVDTNCDPDEIDHVIPANDDAIRAVKLLTSKMADAILEAKQGEETVTA</sequence>
<reference key="1">
    <citation type="submission" date="2009-04" db="EMBL/GenBank/DDBJ databases">
        <title>Genome sequence of Bacillus anthracis A0248.</title>
        <authorList>
            <person name="Dodson R.J."/>
            <person name="Munk A.C."/>
            <person name="Bruce D."/>
            <person name="Detter C."/>
            <person name="Tapia R."/>
            <person name="Sutton G."/>
            <person name="Sims D."/>
            <person name="Brettin T."/>
        </authorList>
    </citation>
    <scope>NUCLEOTIDE SEQUENCE [LARGE SCALE GENOMIC DNA]</scope>
    <source>
        <strain>A0248</strain>
    </source>
</reference>
<comment type="similarity">
    <text evidence="1">Belongs to the universal ribosomal protein uS2 family.</text>
</comment>
<dbReference type="EMBL" id="CP001598">
    <property type="protein sequence ID" value="ACQ49372.1"/>
    <property type="molecule type" value="Genomic_DNA"/>
</dbReference>
<dbReference type="RefSeq" id="WP_000111483.1">
    <property type="nucleotide sequence ID" value="NC_012659.1"/>
</dbReference>
<dbReference type="SMR" id="C3P5M9"/>
<dbReference type="GeneID" id="75086962"/>
<dbReference type="KEGG" id="bai:BAA_3988"/>
<dbReference type="HOGENOM" id="CLU_040318_1_2_9"/>
<dbReference type="GO" id="GO:0022627">
    <property type="term" value="C:cytosolic small ribosomal subunit"/>
    <property type="evidence" value="ECO:0007669"/>
    <property type="project" value="TreeGrafter"/>
</dbReference>
<dbReference type="GO" id="GO:0003735">
    <property type="term" value="F:structural constituent of ribosome"/>
    <property type="evidence" value="ECO:0007669"/>
    <property type="project" value="InterPro"/>
</dbReference>
<dbReference type="GO" id="GO:0006412">
    <property type="term" value="P:translation"/>
    <property type="evidence" value="ECO:0007669"/>
    <property type="project" value="UniProtKB-UniRule"/>
</dbReference>
<dbReference type="CDD" id="cd01425">
    <property type="entry name" value="RPS2"/>
    <property type="match status" value="1"/>
</dbReference>
<dbReference type="FunFam" id="1.10.287.610:FF:000001">
    <property type="entry name" value="30S ribosomal protein S2"/>
    <property type="match status" value="1"/>
</dbReference>
<dbReference type="Gene3D" id="3.40.50.10490">
    <property type="entry name" value="Glucose-6-phosphate isomerase like protein, domain 1"/>
    <property type="match status" value="1"/>
</dbReference>
<dbReference type="Gene3D" id="1.10.287.610">
    <property type="entry name" value="Helix hairpin bin"/>
    <property type="match status" value="1"/>
</dbReference>
<dbReference type="HAMAP" id="MF_00291_B">
    <property type="entry name" value="Ribosomal_uS2_B"/>
    <property type="match status" value="1"/>
</dbReference>
<dbReference type="InterPro" id="IPR001865">
    <property type="entry name" value="Ribosomal_uS2"/>
</dbReference>
<dbReference type="InterPro" id="IPR005706">
    <property type="entry name" value="Ribosomal_uS2_bac/mit/plastid"/>
</dbReference>
<dbReference type="InterPro" id="IPR018130">
    <property type="entry name" value="Ribosomal_uS2_CS"/>
</dbReference>
<dbReference type="InterPro" id="IPR023591">
    <property type="entry name" value="Ribosomal_uS2_flav_dom_sf"/>
</dbReference>
<dbReference type="NCBIfam" id="TIGR01011">
    <property type="entry name" value="rpsB_bact"/>
    <property type="match status" value="1"/>
</dbReference>
<dbReference type="PANTHER" id="PTHR12534">
    <property type="entry name" value="30S RIBOSOMAL PROTEIN S2 PROKARYOTIC AND ORGANELLAR"/>
    <property type="match status" value="1"/>
</dbReference>
<dbReference type="PANTHER" id="PTHR12534:SF0">
    <property type="entry name" value="SMALL RIBOSOMAL SUBUNIT PROTEIN US2M"/>
    <property type="match status" value="1"/>
</dbReference>
<dbReference type="Pfam" id="PF00318">
    <property type="entry name" value="Ribosomal_S2"/>
    <property type="match status" value="1"/>
</dbReference>
<dbReference type="PRINTS" id="PR00395">
    <property type="entry name" value="RIBOSOMALS2"/>
</dbReference>
<dbReference type="SUPFAM" id="SSF52313">
    <property type="entry name" value="Ribosomal protein S2"/>
    <property type="match status" value="1"/>
</dbReference>
<dbReference type="PROSITE" id="PS00962">
    <property type="entry name" value="RIBOSOMAL_S2_1"/>
    <property type="match status" value="1"/>
</dbReference>
<dbReference type="PROSITE" id="PS00963">
    <property type="entry name" value="RIBOSOMAL_S2_2"/>
    <property type="match status" value="1"/>
</dbReference>
<proteinExistence type="inferred from homology"/>
<keyword id="KW-0687">Ribonucleoprotein</keyword>
<keyword id="KW-0689">Ribosomal protein</keyword>
<gene>
    <name evidence="1" type="primary">rpsB</name>
    <name type="ordered locus">BAA_3988</name>
</gene>
<protein>
    <recommendedName>
        <fullName evidence="1">Small ribosomal subunit protein uS2</fullName>
    </recommendedName>
    <alternativeName>
        <fullName evidence="2">30S ribosomal protein S2</fullName>
    </alternativeName>
</protein>
<evidence type="ECO:0000255" key="1">
    <source>
        <dbReference type="HAMAP-Rule" id="MF_00291"/>
    </source>
</evidence>
<evidence type="ECO:0000305" key="2"/>
<organism>
    <name type="scientific">Bacillus anthracis (strain A0248)</name>
    <dbReference type="NCBI Taxonomy" id="592021"/>
    <lineage>
        <taxon>Bacteria</taxon>
        <taxon>Bacillati</taxon>
        <taxon>Bacillota</taxon>
        <taxon>Bacilli</taxon>
        <taxon>Bacillales</taxon>
        <taxon>Bacillaceae</taxon>
        <taxon>Bacillus</taxon>
        <taxon>Bacillus cereus group</taxon>
    </lineage>
</organism>
<feature type="chain" id="PRO_1000194315" description="Small ribosomal subunit protein uS2">
    <location>
        <begin position="1"/>
        <end position="233"/>
    </location>
</feature>